<dbReference type="EMBL" id="M90689">
    <property type="protein sequence ID" value="AAC37483.1"/>
    <property type="molecule type" value="Genomic_DNA"/>
</dbReference>
<dbReference type="EMBL" id="X78993">
    <property type="protein sequence ID" value="CAA55596.1"/>
    <property type="molecule type" value="Genomic_DNA"/>
</dbReference>
<dbReference type="EMBL" id="Z35960">
    <property type="protein sequence ID" value="CAA85044.1"/>
    <property type="molecule type" value="Genomic_DNA"/>
</dbReference>
<dbReference type="EMBL" id="AY558529">
    <property type="protein sequence ID" value="AAS56855.1"/>
    <property type="molecule type" value="Genomic_DNA"/>
</dbReference>
<dbReference type="EMBL" id="BK006936">
    <property type="protein sequence ID" value="DAA07212.1"/>
    <property type="molecule type" value="Genomic_DNA"/>
</dbReference>
<dbReference type="PIR" id="S30793">
    <property type="entry name" value="S30793"/>
</dbReference>
<dbReference type="RefSeq" id="NP_009649.1">
    <property type="nucleotide sequence ID" value="NM_001178439.1"/>
</dbReference>
<dbReference type="PDB" id="6LO8">
    <property type="method" value="EM"/>
    <property type="resolution" value="3.83 A"/>
    <property type="chains" value="F=1-109"/>
</dbReference>
<dbReference type="PDBsum" id="6LO8"/>
<dbReference type="EMDB" id="EMD-0935"/>
<dbReference type="SASBDB" id="P32830"/>
<dbReference type="SMR" id="P32830"/>
<dbReference type="BioGRID" id="32797">
    <property type="interactions" value="26"/>
</dbReference>
<dbReference type="ComplexPortal" id="CPX-1629">
    <property type="entry name" value="TIM22 mitochondrial inner membrane twin-pore carrier translocase complex"/>
</dbReference>
<dbReference type="ComplexPortal" id="CPX-2950">
    <property type="entry name" value="TIM9-TIM10-TIM12 mitochondrial intermembrane space protein transporter complex"/>
</dbReference>
<dbReference type="DIP" id="DIP-1140N"/>
<dbReference type="FunCoup" id="P32830">
    <property type="interactions" value="62"/>
</dbReference>
<dbReference type="IntAct" id="P32830">
    <property type="interactions" value="5"/>
</dbReference>
<dbReference type="STRING" id="4932.YBR091C"/>
<dbReference type="iPTMnet" id="P32830"/>
<dbReference type="PaxDb" id="4932-YBR091C"/>
<dbReference type="PeptideAtlas" id="P32830"/>
<dbReference type="EnsemblFungi" id="YBR091C_mRNA">
    <property type="protein sequence ID" value="YBR091C"/>
    <property type="gene ID" value="YBR091C"/>
</dbReference>
<dbReference type="GeneID" id="852388"/>
<dbReference type="KEGG" id="sce:YBR091C"/>
<dbReference type="AGR" id="SGD:S000000295"/>
<dbReference type="SGD" id="S000000295">
    <property type="gene designation" value="TIM12"/>
</dbReference>
<dbReference type="VEuPathDB" id="FungiDB:YBR091C"/>
<dbReference type="eggNOG" id="KOG3480">
    <property type="taxonomic scope" value="Eukaryota"/>
</dbReference>
<dbReference type="GeneTree" id="ENSGT00390000003068"/>
<dbReference type="HOGENOM" id="CLU_162151_0_0_1"/>
<dbReference type="InParanoid" id="P32830"/>
<dbReference type="OMA" id="EKCIPHE"/>
<dbReference type="OrthoDB" id="274922at2759"/>
<dbReference type="BioCyc" id="YEAST:G3O-29057-MONOMER"/>
<dbReference type="BioGRID-ORCS" id="852388">
    <property type="hits" value="7 hits in 10 CRISPR screens"/>
</dbReference>
<dbReference type="PRO" id="PR:P32830"/>
<dbReference type="Proteomes" id="UP000002311">
    <property type="component" value="Chromosome II"/>
</dbReference>
<dbReference type="RNAct" id="P32830">
    <property type="molecule type" value="protein"/>
</dbReference>
<dbReference type="GO" id="GO:0005743">
    <property type="term" value="C:mitochondrial inner membrane"/>
    <property type="evidence" value="ECO:0000314"/>
    <property type="project" value="ComplexPortal"/>
</dbReference>
<dbReference type="GO" id="GO:0042719">
    <property type="term" value="C:mitochondrial intermembrane space protein transporter complex"/>
    <property type="evidence" value="ECO:0000353"/>
    <property type="project" value="ComplexPortal"/>
</dbReference>
<dbReference type="GO" id="GO:0005739">
    <property type="term" value="C:mitochondrion"/>
    <property type="evidence" value="ECO:0000314"/>
    <property type="project" value="ComplexPortal"/>
</dbReference>
<dbReference type="GO" id="GO:0042721">
    <property type="term" value="C:TIM22 mitochondrial import inner membrane insertion complex"/>
    <property type="evidence" value="ECO:0000314"/>
    <property type="project" value="SGD"/>
</dbReference>
<dbReference type="GO" id="GO:0046872">
    <property type="term" value="F:metal ion binding"/>
    <property type="evidence" value="ECO:0007669"/>
    <property type="project" value="UniProtKB-KW"/>
</dbReference>
<dbReference type="GO" id="GO:0005543">
    <property type="term" value="F:phospholipid binding"/>
    <property type="evidence" value="ECO:0000314"/>
    <property type="project" value="SGD"/>
</dbReference>
<dbReference type="GO" id="GO:0045039">
    <property type="term" value="P:protein insertion into mitochondrial inner membrane"/>
    <property type="evidence" value="ECO:0000314"/>
    <property type="project" value="ComplexPortal"/>
</dbReference>
<dbReference type="GO" id="GO:0071806">
    <property type="term" value="P:protein transmembrane transport"/>
    <property type="evidence" value="ECO:0007669"/>
    <property type="project" value="GOC"/>
</dbReference>
<dbReference type="FunFam" id="1.10.287.810:FF:000011">
    <property type="entry name" value="Mitochondrial regulator of splicing 5"/>
    <property type="match status" value="1"/>
</dbReference>
<dbReference type="Gene3D" id="1.10.287.810">
    <property type="entry name" value="Mitochondrial import inner membrane translocase subunit tim13 like domains"/>
    <property type="match status" value="1"/>
</dbReference>
<dbReference type="InterPro" id="IPR004217">
    <property type="entry name" value="Tim10-like"/>
</dbReference>
<dbReference type="InterPro" id="IPR035427">
    <property type="entry name" value="Tim10-like_dom_sf"/>
</dbReference>
<dbReference type="PANTHER" id="PTHR11038">
    <property type="entry name" value="MITOCHONDRIAL IMPORT INNER MEMBRANE TRANSLOCASE SUBUNIT TIM10"/>
    <property type="match status" value="1"/>
</dbReference>
<dbReference type="PANTHER" id="PTHR11038:SF18">
    <property type="entry name" value="MITOCHONDRIAL IMPORT INNER MEMBRANE TRANSLOCASE SUBUNIT TIM12"/>
    <property type="match status" value="1"/>
</dbReference>
<dbReference type="Pfam" id="PF02953">
    <property type="entry name" value="zf-Tim10_DDP"/>
    <property type="match status" value="1"/>
</dbReference>
<dbReference type="SUPFAM" id="SSF144122">
    <property type="entry name" value="Tim10-like"/>
    <property type="match status" value="1"/>
</dbReference>
<sequence>MSFFLNSLRGNQEVSQEKLDVAGVQFDAMCSTFNNILSTCLEKCIPHEGFGEPDLTKGEQCCIDRCVAKMHYSNRLIGGFVQTRGFGPENQLRHYSRFVAKEIADDSKK</sequence>
<proteinExistence type="evidence at protein level"/>
<reference key="1">
    <citation type="journal article" date="1996" name="J. Biol. Chem.">
        <title>Mrs5p, an essential protein of the mitochondrial intermembrane space, affects protein import into yeast mitochondria.</title>
        <authorList>
            <person name="Jarosch E."/>
            <person name="Tuller G."/>
            <person name="Daum G."/>
            <person name="Waldherr M."/>
            <person name="Voskova A."/>
            <person name="Schweyen R.J."/>
        </authorList>
    </citation>
    <scope>NUCLEOTIDE SEQUENCE [GENOMIC DNA]</scope>
    <scope>FUNCTION</scope>
    <scope>SUBCELLULAR LOCATION</scope>
</reference>
<reference key="2">
    <citation type="journal article" date="1994" name="Yeast">
        <title>Analysis of a 70 kb region on the right arm of yeast chromosome II.</title>
        <authorList>
            <person name="Mannhaupt G."/>
            <person name="Stucka R."/>
            <person name="Ehnle S."/>
            <person name="Vetter I."/>
            <person name="Feldmann H."/>
        </authorList>
    </citation>
    <scope>NUCLEOTIDE SEQUENCE [GENOMIC DNA]</scope>
    <source>
        <strain>ATCC 204508 / S288c</strain>
    </source>
</reference>
<reference key="3">
    <citation type="journal article" date="1994" name="EMBO J.">
        <title>Complete DNA sequence of yeast chromosome II.</title>
        <authorList>
            <person name="Feldmann H."/>
            <person name="Aigle M."/>
            <person name="Aljinovic G."/>
            <person name="Andre B."/>
            <person name="Baclet M.C."/>
            <person name="Barthe C."/>
            <person name="Baur A."/>
            <person name="Becam A.-M."/>
            <person name="Biteau N."/>
            <person name="Boles E."/>
            <person name="Brandt T."/>
            <person name="Brendel M."/>
            <person name="Brueckner M."/>
            <person name="Bussereau F."/>
            <person name="Christiansen C."/>
            <person name="Contreras R."/>
            <person name="Crouzet M."/>
            <person name="Cziepluch C."/>
            <person name="Demolis N."/>
            <person name="Delaveau T."/>
            <person name="Doignon F."/>
            <person name="Domdey H."/>
            <person name="Duesterhus S."/>
            <person name="Dubois E."/>
            <person name="Dujon B."/>
            <person name="El Bakkoury M."/>
            <person name="Entian K.-D."/>
            <person name="Feuermann M."/>
            <person name="Fiers W."/>
            <person name="Fobo G.M."/>
            <person name="Fritz C."/>
            <person name="Gassenhuber J."/>
            <person name="Glansdorff N."/>
            <person name="Goffeau A."/>
            <person name="Grivell L.A."/>
            <person name="de Haan M."/>
            <person name="Hein C."/>
            <person name="Herbert C.J."/>
            <person name="Hollenberg C.P."/>
            <person name="Holmstroem K."/>
            <person name="Jacq C."/>
            <person name="Jacquet M."/>
            <person name="Jauniaux J.-C."/>
            <person name="Jonniaux J.-L."/>
            <person name="Kallesoee T."/>
            <person name="Kiesau P."/>
            <person name="Kirchrath L."/>
            <person name="Koetter P."/>
            <person name="Korol S."/>
            <person name="Liebl S."/>
            <person name="Logghe M."/>
            <person name="Lohan A.J.E."/>
            <person name="Louis E.J."/>
            <person name="Li Z.Y."/>
            <person name="Maat M.J."/>
            <person name="Mallet L."/>
            <person name="Mannhaupt G."/>
            <person name="Messenguy F."/>
            <person name="Miosga T."/>
            <person name="Molemans F."/>
            <person name="Mueller S."/>
            <person name="Nasr F."/>
            <person name="Obermaier B."/>
            <person name="Perea J."/>
            <person name="Pierard A."/>
            <person name="Piravandi E."/>
            <person name="Pohl F.M."/>
            <person name="Pohl T.M."/>
            <person name="Potier S."/>
            <person name="Proft M."/>
            <person name="Purnelle B."/>
            <person name="Ramezani Rad M."/>
            <person name="Rieger M."/>
            <person name="Rose M."/>
            <person name="Schaaff-Gerstenschlaeger I."/>
            <person name="Scherens B."/>
            <person name="Schwarzlose C."/>
            <person name="Skala J."/>
            <person name="Slonimski P.P."/>
            <person name="Smits P.H.M."/>
            <person name="Souciet J.-L."/>
            <person name="Steensma H.Y."/>
            <person name="Stucka R."/>
            <person name="Urrestarazu L.A."/>
            <person name="van der Aart Q.J.M."/>
            <person name="Van Dyck L."/>
            <person name="Vassarotti A."/>
            <person name="Vetter I."/>
            <person name="Vierendeels F."/>
            <person name="Vissers S."/>
            <person name="Wagner G."/>
            <person name="de Wergifosse P."/>
            <person name="Wolfe K.H."/>
            <person name="Zagulski M."/>
            <person name="Zimmermann F.K."/>
            <person name="Mewes H.-W."/>
            <person name="Kleine K."/>
        </authorList>
    </citation>
    <scope>NUCLEOTIDE SEQUENCE [LARGE SCALE GENOMIC DNA]</scope>
    <source>
        <strain>ATCC 204508 / S288c</strain>
    </source>
</reference>
<reference key="4">
    <citation type="journal article" date="2014" name="G3 (Bethesda)">
        <title>The reference genome sequence of Saccharomyces cerevisiae: Then and now.</title>
        <authorList>
            <person name="Engel S.R."/>
            <person name="Dietrich F.S."/>
            <person name="Fisk D.G."/>
            <person name="Binkley G."/>
            <person name="Balakrishnan R."/>
            <person name="Costanzo M.C."/>
            <person name="Dwight S.S."/>
            <person name="Hitz B.C."/>
            <person name="Karra K."/>
            <person name="Nash R.S."/>
            <person name="Weng S."/>
            <person name="Wong E.D."/>
            <person name="Lloyd P."/>
            <person name="Skrzypek M.S."/>
            <person name="Miyasato S.R."/>
            <person name="Simison M."/>
            <person name="Cherry J.M."/>
        </authorList>
    </citation>
    <scope>GENOME REANNOTATION</scope>
    <source>
        <strain>ATCC 204508 / S288c</strain>
    </source>
</reference>
<reference key="5">
    <citation type="journal article" date="2007" name="Genome Res.">
        <title>Approaching a complete repository of sequence-verified protein-encoding clones for Saccharomyces cerevisiae.</title>
        <authorList>
            <person name="Hu Y."/>
            <person name="Rolfs A."/>
            <person name="Bhullar B."/>
            <person name="Murthy T.V.S."/>
            <person name="Zhu C."/>
            <person name="Berger M.F."/>
            <person name="Camargo A.A."/>
            <person name="Kelley F."/>
            <person name="McCarron S."/>
            <person name="Jepson D."/>
            <person name="Richardson A."/>
            <person name="Raphael J."/>
            <person name="Moreira D."/>
            <person name="Taycher E."/>
            <person name="Zuo D."/>
            <person name="Mohr S."/>
            <person name="Kane M.F."/>
            <person name="Williamson J."/>
            <person name="Simpson A.J.G."/>
            <person name="Bulyk M.L."/>
            <person name="Harlow E."/>
            <person name="Marsischky G."/>
            <person name="Kolodner R.D."/>
            <person name="LaBaer J."/>
        </authorList>
    </citation>
    <scope>NUCLEOTIDE SEQUENCE [GENOMIC DNA]</scope>
    <source>
        <strain>ATCC 204508 / S288c</strain>
    </source>
</reference>
<reference key="6">
    <citation type="journal article" date="1996" name="Nature">
        <title>Import of carrier proteins into the mitochondrial inner membrane mediated by Tim22.</title>
        <authorList>
            <person name="Sirrenberg C."/>
            <person name="Bauer M.D."/>
            <person name="Guiard B."/>
            <person name="Neupert W."/>
            <person name="Brunner M."/>
        </authorList>
    </citation>
    <scope>INTERACTION WITH TIM10 AND TIM22</scope>
</reference>
<reference key="7">
    <citation type="journal article" date="1998" name="Nature">
        <title>Carrier protein import into mitochondria mediated by the intermembrane proteins Tim10/Mrs11 and Tim12/Mrs5.</title>
        <authorList>
            <person name="Sirrenberg C."/>
            <person name="Endres M."/>
            <person name="Foelsch H."/>
            <person name="Stuart R.A."/>
            <person name="Neupert W."/>
            <person name="Brunner M."/>
        </authorList>
    </citation>
    <scope>FUNCTION</scope>
    <scope>SUBCELLULAR LOCATION</scope>
    <scope>PROBABLE ZINC-BINDING</scope>
    <scope>INTERACTION WITH TIM10 AND TIM22</scope>
</reference>
<reference key="8">
    <citation type="journal article" date="1998" name="Science">
        <title>Import of mitochondrial carriers mediated by essential proteins of the intermembrane space.</title>
        <authorList>
            <person name="Koehler C.M."/>
            <person name="Jarosch E."/>
            <person name="Tokatlidis K."/>
            <person name="Schmid K."/>
            <person name="Schweyen R.J."/>
            <person name="Schatz G."/>
        </authorList>
    </citation>
    <scope>FUNCTION</scope>
    <scope>INTERACTION WITH TIM10 AND TIM22</scope>
</reference>
<reference key="9">
    <citation type="journal article" date="2000" name="J. Cell Biol.">
        <title>Two intermembrane space TIM complexes interact with different domains of Tim23p during its import into mitochondria.</title>
        <authorList>
            <person name="Davis A.J."/>
            <person name="Sepuri N.B."/>
            <person name="Holder J."/>
            <person name="Johnson A.E."/>
            <person name="Jensen R.E."/>
        </authorList>
    </citation>
    <scope>FUNCTION</scope>
</reference>
<reference key="10">
    <citation type="journal article" date="1999" name="EMBO J.">
        <title>Tim9, a new component of the TIM22.54 translocase in mitochondria.</title>
        <authorList>
            <person name="Adam A."/>
            <person name="Endres M."/>
            <person name="Sirrenberg C."/>
            <person name="Lottspeich F."/>
            <person name="Neupert W."/>
            <person name="Brunner M."/>
        </authorList>
    </citation>
    <scope>INTERACTION WITH TIM9 AND TIM10</scope>
</reference>
<reference key="11">
    <citation type="journal article" date="1999" name="EMBO J.">
        <title>Transport of the ADP/ATP carrier of mitochondria from the TOM complex to the TIM22.54 complex.</title>
        <authorList>
            <person name="Endres M."/>
            <person name="Neupert W."/>
            <person name="Brunner M."/>
        </authorList>
    </citation>
    <scope>FUNCTION</scope>
</reference>
<reference key="12">
    <citation type="journal article" date="2000" name="Mol. Cell. Biol.">
        <title>Tim18p, a new subunit of the TIM22 complex that mediates insertion of imported proteins into the yeast mitochondrial inner membrane.</title>
        <authorList>
            <person name="Koehler C.M."/>
            <person name="Murphy M.P."/>
            <person name="Bally N.A."/>
            <person name="Leuenberger D."/>
            <person name="Oppliger W."/>
            <person name="Dolfini L."/>
            <person name="Junne T."/>
            <person name="Schatz G."/>
            <person name="Or E."/>
        </authorList>
    </citation>
    <scope>IDENTIFICATION BY MASS SPECTROMETRY</scope>
    <scope>IDENTIFICATION IN A THE TIM22 COMPLEX WITH TIM18; TIM22 AND TIM54</scope>
</reference>
<reference key="13">
    <citation type="journal article" date="2003" name="Science">
        <title>Protein insertion into the mitochondrial inner membrane by a twin-pore translocase.</title>
        <authorList>
            <person name="Rehling P."/>
            <person name="Model K."/>
            <person name="Brandner K."/>
            <person name="Kovermann P."/>
            <person name="Sickmann A."/>
            <person name="Meyer H.E."/>
            <person name="Kuehlbrandt W."/>
            <person name="Wagner R."/>
            <person name="Truscott K.N."/>
            <person name="Pfanner N."/>
        </authorList>
    </citation>
    <scope>IDENTIFICATION IN THE TIM22 COMPLEX WITH TIM10; TIM18; TIM22 AND TIM54</scope>
</reference>
<reference key="14">
    <citation type="journal article" date="2003" name="Science">
        <authorList>
            <person name="Rehling P."/>
            <person name="Model K."/>
            <person name="Brandner K."/>
            <person name="Kovermann P."/>
            <person name="Sickmann A."/>
            <person name="Meyer H.E."/>
            <person name="Kuehlbrandt W."/>
            <person name="Wagner R."/>
            <person name="Truscott K.N."/>
            <person name="Pfanner N."/>
        </authorList>
    </citation>
    <scope>ERRATUM OF PUBMED:12637749</scope>
</reference>
<reference key="15">
    <citation type="journal article" date="2012" name="Mol. Cell. Proteomics">
        <title>Intermembrane space proteome of yeast mitochondria.</title>
        <authorList>
            <person name="Voegtle F.N."/>
            <person name="Burkhart J.M."/>
            <person name="Rao S."/>
            <person name="Gerbeth C."/>
            <person name="Hinrichs J."/>
            <person name="Martinou J.C."/>
            <person name="Chacinska A."/>
            <person name="Sickmann A."/>
            <person name="Zahedi R.P."/>
            <person name="Meisinger C."/>
        </authorList>
    </citation>
    <scope>IDENTIFICATION BY MASS SPECTROMETRY</scope>
    <scope>SUBCELLULAR LOCATION [LARGE SCALE ANALYSIS]</scope>
</reference>
<reference key="16">
    <citation type="journal article" date="2012" name="Proc. Natl. Acad. Sci. U.S.A.">
        <title>N-terminal acetylome analyses and functional insights of the N-terminal acetyltransferase NatB.</title>
        <authorList>
            <person name="Van Damme P."/>
            <person name="Lasa M."/>
            <person name="Polevoda B."/>
            <person name="Gazquez C."/>
            <person name="Elosegui-Artola A."/>
            <person name="Kim D.S."/>
            <person name="De Juan-Pardo E."/>
            <person name="Demeyer K."/>
            <person name="Hole K."/>
            <person name="Larrea E."/>
            <person name="Timmerman E."/>
            <person name="Prieto J."/>
            <person name="Arnesen T."/>
            <person name="Sherman F."/>
            <person name="Gevaert K."/>
            <person name="Aldabe R."/>
        </authorList>
    </citation>
    <scope>ACETYLATION [LARGE SCALE ANALYSIS] AT SER-2</scope>
    <scope>CLEAVAGE OF INITIATOR METHIONINE [LARGE SCALE ANALYSIS]</scope>
    <scope>IDENTIFICATION BY MASS SPECTROMETRY [LARGE SCALE ANALYSIS]</scope>
</reference>
<evidence type="ECO:0000250" key="1"/>
<evidence type="ECO:0000269" key="2">
    <source>
    </source>
</evidence>
<evidence type="ECO:0000269" key="3">
    <source>
    </source>
</evidence>
<evidence type="ECO:0000269" key="4">
    <source>
    </source>
</evidence>
<evidence type="ECO:0000269" key="5">
    <source>
    </source>
</evidence>
<evidence type="ECO:0000269" key="6">
    <source>
    </source>
</evidence>
<evidence type="ECO:0000269" key="7">
    <source>
    </source>
</evidence>
<evidence type="ECO:0000269" key="8">
    <source>
    </source>
</evidence>
<evidence type="ECO:0000269" key="9">
    <source>
    </source>
</evidence>
<evidence type="ECO:0000269" key="10">
    <source>
    </source>
</evidence>
<evidence type="ECO:0000269" key="11">
    <source>
    </source>
</evidence>
<evidence type="ECO:0000305" key="12"/>
<evidence type="ECO:0007744" key="13">
    <source>
    </source>
</evidence>
<accession>P32830</accession>
<accession>D6VQ92</accession>
<gene>
    <name type="primary">TIM12</name>
    <name type="synonym">MRS5</name>
    <name type="ordered locus">YBR091C</name>
    <name type="ORF">YBR0812</name>
</gene>
<protein>
    <recommendedName>
        <fullName>Mitochondrial import inner membrane translocase subunit TIM12</fullName>
    </recommendedName>
    <alternativeName>
        <fullName>Mitochondrial regulator of splicing 5</fullName>
    </alternativeName>
</protein>
<keyword id="KW-0002">3D-structure</keyword>
<keyword id="KW-0007">Acetylation</keyword>
<keyword id="KW-1015">Disulfide bond</keyword>
<keyword id="KW-0472">Membrane</keyword>
<keyword id="KW-0479">Metal-binding</keyword>
<keyword id="KW-0496">Mitochondrion</keyword>
<keyword id="KW-0999">Mitochondrion inner membrane</keyword>
<keyword id="KW-0653">Protein transport</keyword>
<keyword id="KW-1185">Reference proteome</keyword>
<keyword id="KW-0811">Translocation</keyword>
<keyword id="KW-0813">Transport</keyword>
<keyword id="KW-0862">Zinc</keyword>
<organism>
    <name type="scientific">Saccharomyces cerevisiae (strain ATCC 204508 / S288c)</name>
    <name type="common">Baker's yeast</name>
    <dbReference type="NCBI Taxonomy" id="559292"/>
    <lineage>
        <taxon>Eukaryota</taxon>
        <taxon>Fungi</taxon>
        <taxon>Dikarya</taxon>
        <taxon>Ascomycota</taxon>
        <taxon>Saccharomycotina</taxon>
        <taxon>Saccharomycetes</taxon>
        <taxon>Saccharomycetales</taxon>
        <taxon>Saccharomycetaceae</taxon>
        <taxon>Saccharomyces</taxon>
    </lineage>
</organism>
<name>TIM12_YEAST</name>
<comment type="function">
    <text evidence="2 4 7 9 10">Essential component of the TIM22 complex, a complex that mediates the import and insertion of multi-pass transmembrane proteins into the mitochondrial inner membrane. The TIM22 complex forms a twin-pore translocase that uses the membrane potential as external driving force. In the TIM22 complex, it acts as a docking point for the soluble TIM9-TIM10 heterohexamer that guides the target proteins in transit through the aqueous mitochondrial intermembrane space.</text>
</comment>
<comment type="subunit">
    <text evidence="3 5 8 9 10 11">Component of the TIM22 complex, whose core is composed of TIM18, TIM22 and TIM54, associated with the peripheral proteins MRS5/TIM12 and the 70 kDa heterohexamer composed of TIM9 and TIM10 (or TIM8 and TIM13). Interacts directly with both the TIM22 protein and the TIM9-TIM10 heterohexamer. Interacts with multi-pass transmembrane proteins in transit.</text>
</comment>
<comment type="interaction">
    <interactant intactId="EBI-11303">
        <id>P32830</id>
    </interactant>
    <interactant intactId="EBI-7193">
        <id>P16892</id>
        <label>FUS3</label>
    </interactant>
    <organismsDiffer>false</organismsDiffer>
    <experiments>2</experiments>
</comment>
<comment type="interaction">
    <interactant intactId="EBI-11303">
        <id>P32830</id>
    </interactant>
    <interactant intactId="EBI-9115">
        <id>P87108</id>
        <label>TIM10</label>
    </interactant>
    <organismsDiffer>false</organismsDiffer>
    <experiments>3</experiments>
</comment>
<comment type="subcellular location">
    <subcellularLocation>
        <location evidence="7 10">Mitochondrion inner membrane</location>
        <topology evidence="7 10">Peripheral membrane protein</topology>
    </subcellularLocation>
    <subcellularLocation>
        <location evidence="6">Mitochondrion intermembrane space</location>
    </subcellularLocation>
</comment>
<comment type="domain">
    <text evidence="1">The twin CX3C motif contains 4 conserved Cys residues that form 2 disulfide bonds in the mitochondrial intermembrane space. However, during the transit of TIM12 from cytoplasm into mitochondrion, the Cys residues probably coordinate zinc, thereby preventing folding and allowing its transfer across mitochondrial outer membrane (By similarity).</text>
</comment>
<comment type="similarity">
    <text evidence="12">Belongs to the small Tim family.</text>
</comment>
<feature type="initiator methionine" description="Removed" evidence="13">
    <location>
        <position position="1"/>
    </location>
</feature>
<feature type="chain" id="PRO_0000096581" description="Mitochondrial import inner membrane translocase subunit TIM12">
    <location>
        <begin position="2"/>
        <end position="109"/>
    </location>
</feature>
<feature type="short sequence motif" description="Twin CX3C motif">
    <location>
        <begin position="40"/>
        <end position="66"/>
    </location>
</feature>
<feature type="modified residue" description="N-acetylserine" evidence="13">
    <location>
        <position position="2"/>
    </location>
</feature>
<feature type="disulfide bond" evidence="1">
    <location>
        <begin position="40"/>
        <end position="66"/>
    </location>
</feature>
<feature type="disulfide bond" evidence="1">
    <location>
        <begin position="44"/>
        <end position="62"/>
    </location>
</feature>